<protein>
    <recommendedName>
        <fullName>Myxobacterial hemagglutinin</fullName>
    </recommendedName>
    <alternativeName>
        <fullName>Lectin</fullName>
    </alternativeName>
</protein>
<organism>
    <name type="scientific">Myxococcus xanthus</name>
    <dbReference type="NCBI Taxonomy" id="34"/>
    <lineage>
        <taxon>Bacteria</taxon>
        <taxon>Pseudomonadati</taxon>
        <taxon>Myxococcota</taxon>
        <taxon>Myxococcia</taxon>
        <taxon>Myxococcales</taxon>
        <taxon>Cystobacterineae</taxon>
        <taxon>Myxococcaceae</taxon>
        <taxon>Myxococcus</taxon>
    </lineage>
</organism>
<reference key="1">
    <citation type="journal article" date="1986" name="Proc. Natl. Acad. Sci. U.S.A.">
        <title>Nucleotide sequence of the myxobacterial hemagglutinin gene contains four homologous domains.</title>
        <authorList>
            <person name="Romeo J.M."/>
            <person name="Esmon B."/>
            <person name="Zusman D.R."/>
        </authorList>
    </citation>
    <scope>NUCLEOTIDE SEQUENCE [GENOMIC DNA]</scope>
</reference>
<name>MBHA_MYXXA</name>
<gene>
    <name type="primary">mbhA</name>
</gene>
<evidence type="ECO:0000305" key="1"/>
<evidence type="ECO:0007829" key="2">
    <source>
        <dbReference type="PDB" id="4FBR"/>
    </source>
</evidence>
<feature type="chain" id="PRO_0000096268" description="Myxobacterial hemagglutinin">
    <location>
        <begin position="1"/>
        <end position="267"/>
    </location>
</feature>
<feature type="repeat" description="1">
    <location>
        <begin position="1"/>
        <end position="66"/>
    </location>
</feature>
<feature type="repeat" description="2">
    <location>
        <begin position="67"/>
        <end position="133"/>
    </location>
</feature>
<feature type="repeat" description="3">
    <location>
        <begin position="134"/>
        <end position="200"/>
    </location>
</feature>
<feature type="repeat" description="4">
    <location>
        <begin position="201"/>
        <end position="267"/>
    </location>
</feature>
<feature type="region of interest" description="4 X 65 AA tandem repeats">
    <location>
        <begin position="1"/>
        <end position="267"/>
    </location>
</feature>
<feature type="strand" evidence="2">
    <location>
        <begin position="3"/>
        <end position="9"/>
    </location>
</feature>
<feature type="strand" evidence="2">
    <location>
        <begin position="18"/>
        <end position="24"/>
    </location>
</feature>
<feature type="strand" evidence="2">
    <location>
        <begin position="33"/>
        <end position="39"/>
    </location>
</feature>
<feature type="strand" evidence="2">
    <location>
        <begin position="45"/>
        <end position="53"/>
    </location>
</feature>
<feature type="strand" evidence="2">
    <location>
        <begin position="59"/>
        <end position="65"/>
    </location>
</feature>
<feature type="strand" evidence="2">
    <location>
        <begin position="70"/>
        <end position="79"/>
    </location>
</feature>
<feature type="strand" evidence="2">
    <location>
        <begin position="84"/>
        <end position="91"/>
    </location>
</feature>
<feature type="strand" evidence="2">
    <location>
        <begin position="100"/>
        <end position="106"/>
    </location>
</feature>
<feature type="strand" evidence="2">
    <location>
        <begin position="112"/>
        <end position="120"/>
    </location>
</feature>
<feature type="strand" evidence="2">
    <location>
        <begin position="126"/>
        <end position="132"/>
    </location>
</feature>
<feature type="strand" evidence="2">
    <location>
        <begin position="137"/>
        <end position="143"/>
    </location>
</feature>
<feature type="strand" evidence="2">
    <location>
        <begin position="152"/>
        <end position="158"/>
    </location>
</feature>
<feature type="strand" evidence="2">
    <location>
        <begin position="167"/>
        <end position="173"/>
    </location>
</feature>
<feature type="strand" evidence="2">
    <location>
        <begin position="179"/>
        <end position="187"/>
    </location>
</feature>
<feature type="strand" evidence="2">
    <location>
        <begin position="193"/>
        <end position="201"/>
    </location>
</feature>
<feature type="strand" evidence="2">
    <location>
        <begin position="204"/>
        <end position="210"/>
    </location>
</feature>
<feature type="strand" evidence="2">
    <location>
        <begin position="219"/>
        <end position="225"/>
    </location>
</feature>
<feature type="strand" evidence="2">
    <location>
        <begin position="234"/>
        <end position="240"/>
    </location>
</feature>
<feature type="strand" evidence="2">
    <location>
        <begin position="246"/>
        <end position="254"/>
    </location>
</feature>
<feature type="strand" evidence="2">
    <location>
        <begin position="260"/>
        <end position="266"/>
    </location>
</feature>
<comment type="function">
    <text>This lectin might have a role in the differentiation of cells.</text>
</comment>
<comment type="developmental stage">
    <text>M.xanthus is a rod-shaped bacterium with a complex life cycle that includes formation of fruiting bodies. This protein is induced during the aggregation phase of fruiting body formation.</text>
</comment>
<comment type="similarity">
    <text evidence="1">Belongs to the bacterial lectin family.</text>
</comment>
<keyword id="KW-0002">3D-structure</keyword>
<keyword id="KW-0293">Fruiting body</keyword>
<keyword id="KW-0348">Hemagglutinin</keyword>
<keyword id="KW-0430">Lectin</keyword>
<keyword id="KW-0677">Repeat</keyword>
<dbReference type="EMBL" id="M13831">
    <property type="protein sequence ID" value="AAA25399.1"/>
    <property type="molecule type" value="Genomic_DNA"/>
</dbReference>
<dbReference type="PIR" id="A23542">
    <property type="entry name" value="HMYZMX"/>
</dbReference>
<dbReference type="RefSeq" id="WP_011556980.1">
    <property type="nucleotide sequence ID" value="NZ_JABFNQ010000012.1"/>
</dbReference>
<dbReference type="PDB" id="4FBR">
    <property type="method" value="X-ray"/>
    <property type="resolution" value="1.60 A"/>
    <property type="chains" value="A=1-267"/>
</dbReference>
<dbReference type="PDB" id="4FBV">
    <property type="method" value="X-ray"/>
    <property type="resolution" value="1.76 A"/>
    <property type="chains" value="A=1-267"/>
</dbReference>
<dbReference type="PDBsum" id="4FBR"/>
<dbReference type="PDBsum" id="4FBV"/>
<dbReference type="SMR" id="P07386"/>
<dbReference type="UniLectin" id="P07386"/>
<dbReference type="OMA" id="YSVENQW"/>
<dbReference type="EvolutionaryTrace" id="P07386"/>
<dbReference type="GO" id="GO:0030246">
    <property type="term" value="F:carbohydrate binding"/>
    <property type="evidence" value="ECO:0007669"/>
    <property type="project" value="UniProtKB-KW"/>
</dbReference>
<dbReference type="Gene3D" id="2.40.128.450">
    <property type="match status" value="2"/>
</dbReference>
<dbReference type="InterPro" id="IPR053726">
    <property type="entry name" value="Bacterial_Lectin_Domain_sf"/>
</dbReference>
<dbReference type="InterPro" id="IPR040964">
    <property type="entry name" value="SBD"/>
</dbReference>
<dbReference type="Pfam" id="PF17882">
    <property type="entry name" value="SBD"/>
    <property type="match status" value="4"/>
</dbReference>
<proteinExistence type="evidence at protein level"/>
<accession>P07386</accession>
<sequence length="267" mass="27916">MAAYLVQNQWGGSQATWNPGGLWLIGARDKQNVVALDIKSDDGGKTLKGTMTYNGEGPIGFRGTLSSANNYTVENQWGGTSAPWQPGGVWVLGARDKQNIVAVSIKSNDGGKTLTGTTTYNGEGPIGFKSEVTDGDTYSVENQWGGSAAPWHSGGVWVLGTRGKQNVINVDAKSNDGGKTLSGTMTYNGEGPIGFRGTLTSPDTYTVENQWGGSTAPWNPGGFWMIGARNGQNVVALNVASSDGGKTLAGTMIYNGEGPIGFRARLG</sequence>